<comment type="function">
    <text evidence="1">Receptor for both interleukin 4 and interleukin 13. Couples to the JAK1/2/3-STAT6 pathway. The IL4 response is involved in promoting Th2 differentiation. The IL4/IL13 responses are involved in regulating IgE production and, chemokine and mucus production at sites of allergic inflammation. In certain cell types, can signal through activation of insulin receptor substrates, IRS1/IRS2 (By similarity).</text>
</comment>
<comment type="subunit">
    <text evidence="2 3">The functional IL4 receptor is formed by initial binding of IL4 to IL4R. Subsequent recruitment to the complex of the common gamma chain, in immune cells, creates a type I receptor and, in non-immune cells, of IL13RA1 forms a type II receptor. IL4R can also interact with the IL13/IL13RA1 complex to form a similar type II receptor. Interacts with PIK3C3. Interacts with the SH2-containing phosphatases, PTPN6/SHIP1, PTPN11/SHIP2 and INPP5D/SHIP. Interacts with JAK1 through a Box 1-containing region; inhibited by SOCS5. Interacts with SOCS5; inhibits IL4 signaling. Interacts with JAK3. Interacts with CLM1. Interacts with IL13RA2.</text>
</comment>
<comment type="subcellular location">
    <subcellularLocation>
        <location evidence="1">Membrane</location>
        <topology evidence="1">Single-pass type I membrane protein</topology>
    </subcellularLocation>
</comment>
<comment type="domain">
    <text>The WSXWS motif appears to be necessary for proper protein folding and thereby efficient intracellular transport and cell-surface receptor binding.</text>
</comment>
<comment type="domain">
    <text>The box 1 motif is required for JAK interaction and/or activation.</text>
</comment>
<comment type="domain">
    <text>Contains 1 copy of a cytoplasmic motif that is referred to as the immunoreceptor tyrosine-based inhibitor motif (ITIM). This motif is involved in modulation of cellular responses. The phosphorylated ITIM motif can bind the SH2 domain of several SH2-containing phosphatases.</text>
</comment>
<comment type="PTM">
    <text evidence="1">On IL4 binding, phosphorylated on C-terminal tyrosine residues.</text>
</comment>
<comment type="similarity">
    <text evidence="7">Belongs to the type I cytokine receptor family. Type 4 subfamily.</text>
</comment>
<protein>
    <recommendedName>
        <fullName>Interleukin-4 receptor subunit alpha</fullName>
        <shortName>IL-4 receptor subunit alpha</shortName>
        <shortName>IL-4R subunit alpha</shortName>
        <shortName>IL-4R-alpha</shortName>
        <shortName>IL-4RA</shortName>
    </recommendedName>
    <cdAntigenName>CD124</cdAntigenName>
</protein>
<accession>Q863Z5</accession>
<organism>
    <name type="scientific">Sus scrofa</name>
    <name type="common">Pig</name>
    <dbReference type="NCBI Taxonomy" id="9823"/>
    <lineage>
        <taxon>Eukaryota</taxon>
        <taxon>Metazoa</taxon>
        <taxon>Chordata</taxon>
        <taxon>Craniata</taxon>
        <taxon>Vertebrata</taxon>
        <taxon>Euteleostomi</taxon>
        <taxon>Mammalia</taxon>
        <taxon>Eutheria</taxon>
        <taxon>Laurasiatheria</taxon>
        <taxon>Artiodactyla</taxon>
        <taxon>Suina</taxon>
        <taxon>Suidae</taxon>
        <taxon>Sus</taxon>
    </lineage>
</organism>
<reference key="1">
    <citation type="submission" date="2003-03" db="EMBL/GenBank/DDBJ databases">
        <title>Molecular cloning of the swine IL-4 receptor alpha and IL-13 receptor alpha 1 chains: effects of experimental Toxoplasma gondii and Ascaris suum infections on tissue mRNA levels.</title>
        <authorList>
            <person name="Zarlenga D.S. Jr."/>
            <person name="Dawson H."/>
            <person name="Solano-Aguilar G."/>
            <person name="Urban J.F. Jr."/>
        </authorList>
    </citation>
    <scope>NUCLEOTIDE SEQUENCE [MRNA]</scope>
</reference>
<proteinExistence type="evidence at transcript level"/>
<sequence length="830" mass="89441">MGWLCPGLTFSVSCLILVWAAGSGVTCVSPGGVRVLEWPICLSDYVSTSTCEWRMAGPVNCSAEFRLSYQLKFFNTENHTTCVPENRAGSVCVCHMLMESIVIVDTYQLDLWAGEQLLWNSSFKPSQNVKPLAPRNLMVHANISHTWLLTWSNPYPSESYLYSELTYLVNISNENDPTDFRIYNVTYLGPTLRFPANTLKSGAAYSARVKAWAQRYNSTWSEWSPSVKWLNYYEEPLEQRLPLGVSISCVVILIICLSCYFGIIRIKKEWWDQIPNPAHSPLVAIVIQDSQVSLWGKRSRGQEPAKCPRWKTCLTKLLPCFLEHGVDRDEDSSKAARNGPSQGPAKAAWRPVEVSKTILWPESISVVRCVELFEAQVENEEEEEEEDKGSFCPSPENSGGSFQEGREGIAARLTESLFLDLLGDESGAFSPQGMGQSCLLPPLENASAPMPWAEFPRVGSPEASSQGKEQPLNPEPSPQATPTQSLASLAFPELPAVIADNPAYRSFSTFLSQSSDPGELDSDPELAEALEEVEPSLPAAPQPSEPPPTLQPEPETWEQILRQSVLQRRAAPAPASGPSSSGYREFVHAVEQGTQDRRAAGSGPCGEAGYKAFSSLLAGSASCPGTSGLEPSSGESGYKPFQSLPPGCPETPVPTPLFTFGLDMEPPPSPQNPPFPGSSAECPGLEPAVKGEDGQKPPLALEQAADPLRDDLGSGIVYSALTCHLCGHLKQCHGQEDGGKVHVVASPCCSCCCEDGSPPMVTPLRAPDAPSSGVPLEASLSPASLALLGVSREGKIPPCLQITPSNVQSSSQTPTAVAMLSPGPACMDTS</sequence>
<dbReference type="EMBL" id="AY266143">
    <property type="protein sequence ID" value="AAP23302.1"/>
    <property type="molecule type" value="mRNA"/>
</dbReference>
<dbReference type="RefSeq" id="NP_999505.1">
    <property type="nucleotide sequence ID" value="NM_214340.1"/>
</dbReference>
<dbReference type="SMR" id="Q863Z5"/>
<dbReference type="FunCoup" id="Q863Z5">
    <property type="interactions" value="325"/>
</dbReference>
<dbReference type="STRING" id="9823.ENSSSCP00000008346"/>
<dbReference type="GlyCosmos" id="Q863Z5">
    <property type="glycosylation" value="7 sites, No reported glycans"/>
</dbReference>
<dbReference type="GlyGen" id="Q863Z5">
    <property type="glycosylation" value="8 sites"/>
</dbReference>
<dbReference type="PaxDb" id="9823-ENSSSCP00000008346"/>
<dbReference type="GeneID" id="397614"/>
<dbReference type="KEGG" id="ssc:397614"/>
<dbReference type="CTD" id="3566"/>
<dbReference type="eggNOG" id="ENOG502S3Y8">
    <property type="taxonomic scope" value="Eukaryota"/>
</dbReference>
<dbReference type="HOGENOM" id="CLU_020561_0_0_1"/>
<dbReference type="InParanoid" id="Q863Z5"/>
<dbReference type="OrthoDB" id="8962741at2759"/>
<dbReference type="Proteomes" id="UP000008227">
    <property type="component" value="Unplaced"/>
</dbReference>
<dbReference type="Proteomes" id="UP000314985">
    <property type="component" value="Unplaced"/>
</dbReference>
<dbReference type="Proteomes" id="UP000694570">
    <property type="component" value="Unplaced"/>
</dbReference>
<dbReference type="Proteomes" id="UP000694571">
    <property type="component" value="Unplaced"/>
</dbReference>
<dbReference type="Proteomes" id="UP000694720">
    <property type="component" value="Unplaced"/>
</dbReference>
<dbReference type="Proteomes" id="UP000694722">
    <property type="component" value="Unplaced"/>
</dbReference>
<dbReference type="Proteomes" id="UP000694723">
    <property type="component" value="Unplaced"/>
</dbReference>
<dbReference type="Proteomes" id="UP000694724">
    <property type="component" value="Unplaced"/>
</dbReference>
<dbReference type="Proteomes" id="UP000694725">
    <property type="component" value="Unplaced"/>
</dbReference>
<dbReference type="Proteomes" id="UP000694726">
    <property type="component" value="Unplaced"/>
</dbReference>
<dbReference type="Proteomes" id="UP000694727">
    <property type="component" value="Unplaced"/>
</dbReference>
<dbReference type="Proteomes" id="UP000694728">
    <property type="component" value="Unplaced"/>
</dbReference>
<dbReference type="GO" id="GO:0009897">
    <property type="term" value="C:external side of plasma membrane"/>
    <property type="evidence" value="ECO:0000318"/>
    <property type="project" value="GO_Central"/>
</dbReference>
<dbReference type="GO" id="GO:0004896">
    <property type="term" value="F:cytokine receptor activity"/>
    <property type="evidence" value="ECO:0000318"/>
    <property type="project" value="GO_Central"/>
</dbReference>
<dbReference type="GO" id="GO:0019221">
    <property type="term" value="P:cytokine-mediated signaling pathway"/>
    <property type="evidence" value="ECO:0000318"/>
    <property type="project" value="GO_Central"/>
</dbReference>
<dbReference type="GO" id="GO:0002532">
    <property type="term" value="P:production of molecular mediator involved in inflammatory response"/>
    <property type="evidence" value="ECO:0007669"/>
    <property type="project" value="InterPro"/>
</dbReference>
<dbReference type="CDD" id="cd00063">
    <property type="entry name" value="FN3"/>
    <property type="match status" value="1"/>
</dbReference>
<dbReference type="Gene3D" id="2.60.40.10">
    <property type="entry name" value="Immunoglobulins"/>
    <property type="match status" value="2"/>
</dbReference>
<dbReference type="InterPro" id="IPR003961">
    <property type="entry name" value="FN3_dom"/>
</dbReference>
<dbReference type="InterPro" id="IPR036116">
    <property type="entry name" value="FN3_sf"/>
</dbReference>
<dbReference type="InterPro" id="IPR003531">
    <property type="entry name" value="Hempt_rcpt_S_F1_CS"/>
</dbReference>
<dbReference type="InterPro" id="IPR013783">
    <property type="entry name" value="Ig-like_fold"/>
</dbReference>
<dbReference type="InterPro" id="IPR015319">
    <property type="entry name" value="IL-4_rcpt-alpha_N"/>
</dbReference>
<dbReference type="PANTHER" id="PTHR23037">
    <property type="entry name" value="CYTOKINE RECEPTOR"/>
    <property type="match status" value="1"/>
</dbReference>
<dbReference type="PANTHER" id="PTHR23037:SF32">
    <property type="entry name" value="INTERLEUKIN-4 RECEPTOR SUBUNIT ALPHA"/>
    <property type="match status" value="1"/>
</dbReference>
<dbReference type="Pfam" id="PF09238">
    <property type="entry name" value="IL4Ra_N"/>
    <property type="match status" value="1"/>
</dbReference>
<dbReference type="SUPFAM" id="SSF49265">
    <property type="entry name" value="Fibronectin type III"/>
    <property type="match status" value="2"/>
</dbReference>
<dbReference type="PROSITE" id="PS50853">
    <property type="entry name" value="FN3"/>
    <property type="match status" value="1"/>
</dbReference>
<dbReference type="PROSITE" id="PS01355">
    <property type="entry name" value="HEMATOPO_REC_S_F1"/>
    <property type="match status" value="1"/>
</dbReference>
<gene>
    <name type="primary">IL4R</name>
</gene>
<name>IL4RA_PIG</name>
<feature type="signal peptide" evidence="4">
    <location>
        <begin position="1"/>
        <end position="32"/>
    </location>
</feature>
<feature type="chain" id="PRO_0000010891" description="Interleukin-4 receptor subunit alpha">
    <location>
        <begin position="33"/>
        <end position="830"/>
    </location>
</feature>
<feature type="topological domain" description="Extracellular" evidence="4">
    <location>
        <begin position="33"/>
        <end position="240"/>
    </location>
</feature>
<feature type="transmembrane region" description="Helical" evidence="4">
    <location>
        <begin position="241"/>
        <end position="264"/>
    </location>
</feature>
<feature type="topological domain" description="Cytoplasmic" evidence="4">
    <location>
        <begin position="265"/>
        <end position="830"/>
    </location>
</feature>
<feature type="domain" description="Fibronectin type-III" evidence="5">
    <location>
        <begin position="133"/>
        <end position="232"/>
    </location>
</feature>
<feature type="region of interest" description="Disordered" evidence="6">
    <location>
        <begin position="378"/>
        <end position="403"/>
    </location>
</feature>
<feature type="region of interest" description="Required for IRS1 activation and IL4-induced cell growth" evidence="1">
    <location>
        <begin position="444"/>
        <end position="564"/>
    </location>
</feature>
<feature type="region of interest" description="Disordered" evidence="6">
    <location>
        <begin position="450"/>
        <end position="488"/>
    </location>
</feature>
<feature type="region of interest" description="Disordered" evidence="6">
    <location>
        <begin position="508"/>
        <end position="610"/>
    </location>
</feature>
<feature type="region of interest" description="Required for IL4-induced gene expression" evidence="1">
    <location>
        <begin position="564"/>
        <end position="662"/>
    </location>
</feature>
<feature type="region of interest" description="Disordered" evidence="6">
    <location>
        <begin position="623"/>
        <end position="696"/>
    </location>
</feature>
<feature type="region of interest" description="Disordered" evidence="6">
    <location>
        <begin position="811"/>
        <end position="830"/>
    </location>
</feature>
<feature type="short sequence motif" description="WSXWS motif">
    <location>
        <begin position="220"/>
        <end position="224"/>
    </location>
</feature>
<feature type="short sequence motif" description="Box 1 motif">
    <location>
        <begin position="270"/>
        <end position="278"/>
    </location>
</feature>
<feature type="short sequence motif" description="ITIM motif">
    <location>
        <begin position="716"/>
        <end position="721"/>
    </location>
</feature>
<feature type="compositionally biased region" description="Acidic residues" evidence="6">
    <location>
        <begin position="378"/>
        <end position="387"/>
    </location>
</feature>
<feature type="compositionally biased region" description="Acidic residues" evidence="6">
    <location>
        <begin position="518"/>
        <end position="534"/>
    </location>
</feature>
<feature type="compositionally biased region" description="Pro residues" evidence="6">
    <location>
        <begin position="538"/>
        <end position="551"/>
    </location>
</feature>
<feature type="compositionally biased region" description="Low complexity" evidence="6">
    <location>
        <begin position="570"/>
        <end position="582"/>
    </location>
</feature>
<feature type="compositionally biased region" description="Polar residues" evidence="6">
    <location>
        <begin position="623"/>
        <end position="635"/>
    </location>
</feature>
<feature type="compositionally biased region" description="Pro residues" evidence="6">
    <location>
        <begin position="646"/>
        <end position="655"/>
    </location>
</feature>
<feature type="compositionally biased region" description="Pro residues" evidence="6">
    <location>
        <begin position="665"/>
        <end position="676"/>
    </location>
</feature>
<feature type="modified residue" description="Phosphoserine" evidence="2">
    <location>
        <position position="172"/>
    </location>
</feature>
<feature type="modified residue" description="Phosphotyrosine" evidence="3">
    <location>
        <position position="504"/>
    </location>
</feature>
<feature type="modified residue" description="Phosphotyrosine" evidence="3">
    <location>
        <position position="583"/>
    </location>
</feature>
<feature type="modified residue" description="Phosphotyrosine" evidence="3">
    <location>
        <position position="610"/>
    </location>
</feature>
<feature type="modified residue" description="Phosphotyrosine" evidence="3">
    <location>
        <position position="638"/>
    </location>
</feature>
<feature type="glycosylation site" description="N-linked (GlcNAc...) asparagine" evidence="4">
    <location>
        <position position="60"/>
    </location>
</feature>
<feature type="glycosylation site" description="N-linked (GlcNAc...) asparagine" evidence="4">
    <location>
        <position position="78"/>
    </location>
</feature>
<feature type="glycosylation site" description="N-linked (GlcNAc...) asparagine" evidence="4">
    <location>
        <position position="120"/>
    </location>
</feature>
<feature type="glycosylation site" description="N-linked (GlcNAc...) asparagine" evidence="4">
    <location>
        <position position="142"/>
    </location>
</feature>
<feature type="glycosylation site" description="N-linked (GlcNAc...) asparagine" evidence="4">
    <location>
        <position position="170"/>
    </location>
</feature>
<feature type="glycosylation site" description="N-linked (GlcNAc...) asparagine" evidence="4">
    <location>
        <position position="184"/>
    </location>
</feature>
<feature type="glycosylation site" description="N-linked (GlcNAc...) asparagine" evidence="4">
    <location>
        <position position="217"/>
    </location>
</feature>
<feature type="disulfide bond" evidence="1">
    <location>
        <begin position="41"/>
        <end position="51"/>
    </location>
</feature>
<feature type="disulfide bond" evidence="1">
    <location>
        <begin position="82"/>
        <end position="94"/>
    </location>
</feature>
<keyword id="KW-1015">Disulfide bond</keyword>
<keyword id="KW-0325">Glycoprotein</keyword>
<keyword id="KW-0472">Membrane</keyword>
<keyword id="KW-0597">Phosphoprotein</keyword>
<keyword id="KW-0675">Receptor</keyword>
<keyword id="KW-1185">Reference proteome</keyword>
<keyword id="KW-0732">Signal</keyword>
<keyword id="KW-0812">Transmembrane</keyword>
<keyword id="KW-1133">Transmembrane helix</keyword>
<evidence type="ECO:0000250" key="1"/>
<evidence type="ECO:0000250" key="2">
    <source>
        <dbReference type="UniProtKB" id="P16382"/>
    </source>
</evidence>
<evidence type="ECO:0000250" key="3">
    <source>
        <dbReference type="UniProtKB" id="P24394"/>
    </source>
</evidence>
<evidence type="ECO:0000255" key="4"/>
<evidence type="ECO:0000255" key="5">
    <source>
        <dbReference type="PROSITE-ProRule" id="PRU00316"/>
    </source>
</evidence>
<evidence type="ECO:0000256" key="6">
    <source>
        <dbReference type="SAM" id="MobiDB-lite"/>
    </source>
</evidence>
<evidence type="ECO:0000305" key="7"/>